<reference key="1">
    <citation type="journal article" date="1997" name="Nature">
        <title>Molecular basis of symbiosis between Rhizobium and legumes.</title>
        <authorList>
            <person name="Freiberg C.A."/>
            <person name="Fellay R."/>
            <person name="Bairoch A."/>
            <person name="Broughton W.J."/>
            <person name="Rosenthal A."/>
            <person name="Perret X."/>
        </authorList>
    </citation>
    <scope>NUCLEOTIDE SEQUENCE [LARGE SCALE GENOMIC DNA]</scope>
    <source>
        <strain>NBRC 101917 / NGR234</strain>
    </source>
</reference>
<reference key="2">
    <citation type="journal article" date="2009" name="Appl. Environ. Microbiol.">
        <title>Rhizobium sp. strain NGR234 possesses a remarkable number of secretion systems.</title>
        <authorList>
            <person name="Schmeisser C."/>
            <person name="Liesegang H."/>
            <person name="Krysciak D."/>
            <person name="Bakkou N."/>
            <person name="Le Quere A."/>
            <person name="Wollherr A."/>
            <person name="Heinemeyer I."/>
            <person name="Morgenstern B."/>
            <person name="Pommerening-Roeser A."/>
            <person name="Flores M."/>
            <person name="Palacios R."/>
            <person name="Brenner S."/>
            <person name="Gottschalk G."/>
            <person name="Schmitz R.A."/>
            <person name="Broughton W.J."/>
            <person name="Perret X."/>
            <person name="Strittmatter A.W."/>
            <person name="Streit W.R."/>
        </authorList>
    </citation>
    <scope>NUCLEOTIDE SEQUENCE [LARGE SCALE GENOMIC DNA]</scope>
    <source>
        <strain>NBRC 101917 / NGR234</strain>
    </source>
</reference>
<sequence>MMLPVTSISNSLPRVASSSFGEQAQFERALAQAADSMKNDTASTPVRTAPISPPMDVHRAAPTSPLEDRVLQTISSICPDSIVAAAAPNHKAALISGAPPGPSQKLPVEGGAGTERLGIPQGGHDFDVMVAGLRDLYNGVTQVALVSKGISGITSSVNKLLKEG</sequence>
<evidence type="ECO:0000256" key="1">
    <source>
        <dbReference type="SAM" id="MobiDB-lite"/>
    </source>
</evidence>
<name>NOLB_SINFN</name>
<accession>P55713</accession>
<organism>
    <name type="scientific">Sinorhizobium fredii (strain NBRC 101917 / NGR234)</name>
    <dbReference type="NCBI Taxonomy" id="394"/>
    <lineage>
        <taxon>Bacteria</taxon>
        <taxon>Pseudomonadati</taxon>
        <taxon>Pseudomonadota</taxon>
        <taxon>Alphaproteobacteria</taxon>
        <taxon>Hyphomicrobiales</taxon>
        <taxon>Rhizobiaceae</taxon>
        <taxon>Sinorhizobium/Ensifer group</taxon>
        <taxon>Sinorhizobium</taxon>
    </lineage>
</organism>
<protein>
    <recommendedName>
        <fullName>Nodulation protein NolB</fullName>
    </recommendedName>
</protein>
<feature type="chain" id="PRO_0000096941" description="Nodulation protein NolB">
    <location>
        <begin position="1"/>
        <end position="164"/>
    </location>
</feature>
<feature type="region of interest" description="Disordered" evidence="1">
    <location>
        <begin position="37"/>
        <end position="57"/>
    </location>
</feature>
<feature type="region of interest" description="Disordered" evidence="1">
    <location>
        <begin position="94"/>
        <end position="119"/>
    </location>
</feature>
<gene>
    <name type="primary">nolB</name>
    <name type="ordered locus">NGR_a00680</name>
    <name type="ORF">y4yE</name>
</gene>
<keyword id="KW-0536">Nodulation</keyword>
<keyword id="KW-0614">Plasmid</keyword>
<keyword id="KW-1185">Reference proteome</keyword>
<comment type="interaction">
    <interactant intactId="EBI-6401037">
        <id>P55713</id>
    </interactant>
    <interactant intactId="EBI-6401053">
        <id>C4ALD0</id>
        <label>nopA</label>
    </interactant>
    <organismsDiffer>false</organismsDiffer>
    <experiments>4</experiments>
</comment>
<geneLocation type="plasmid">
    <name>sym pNGR234a</name>
</geneLocation>
<proteinExistence type="evidence at protein level"/>
<dbReference type="EMBL" id="U00090">
    <property type="protein sequence ID" value="AAB91944.1"/>
    <property type="molecule type" value="Genomic_DNA"/>
</dbReference>
<dbReference type="RefSeq" id="NP_444157.1">
    <property type="nucleotide sequence ID" value="NC_000914.2"/>
</dbReference>
<dbReference type="RefSeq" id="WP_010875109.1">
    <property type="nucleotide sequence ID" value="NC_000914.2"/>
</dbReference>
<dbReference type="IntAct" id="P55713">
    <property type="interactions" value="2"/>
</dbReference>
<dbReference type="KEGG" id="rhi:NGR_a00680"/>
<dbReference type="eggNOG" id="ENOG5032TMS">
    <property type="taxonomic scope" value="Bacteria"/>
</dbReference>
<dbReference type="HOGENOM" id="CLU_135631_0_0_5"/>
<dbReference type="OrthoDB" id="9807728at2"/>
<dbReference type="Proteomes" id="UP000001054">
    <property type="component" value="Plasmid pNGR234a"/>
</dbReference>
<dbReference type="InterPro" id="IPR016775">
    <property type="entry name" value="Nodulation_NolB"/>
</dbReference>
<dbReference type="Pfam" id="PF17398">
    <property type="entry name" value="NolB"/>
    <property type="match status" value="1"/>
</dbReference>
<dbReference type="PIRSF" id="PIRSF020514">
    <property type="entry name" value="Nodulation_NolB"/>
    <property type="match status" value="1"/>
</dbReference>